<protein>
    <recommendedName>
        <fullName evidence="1">Small ribosomal subunit protein bS16</fullName>
    </recommendedName>
    <alternativeName>
        <fullName evidence="2">30S ribosomal protein S16</fullName>
    </alternativeName>
</protein>
<reference key="1">
    <citation type="journal article" date="2008" name="BMC Genomics">
        <title>The missing link: Bordetella petrii is endowed with both the metabolic versatility of environmental bacteria and virulence traits of pathogenic Bordetellae.</title>
        <authorList>
            <person name="Gross R."/>
            <person name="Guzman C.A."/>
            <person name="Sebaihia M."/>
            <person name="Martin dos Santos V.A.P."/>
            <person name="Pieper D.H."/>
            <person name="Koebnik R."/>
            <person name="Lechner M."/>
            <person name="Bartels D."/>
            <person name="Buhrmester J."/>
            <person name="Choudhuri J.V."/>
            <person name="Ebensen T."/>
            <person name="Gaigalat L."/>
            <person name="Herrmann S."/>
            <person name="Khachane A.N."/>
            <person name="Larisch C."/>
            <person name="Link S."/>
            <person name="Linke B."/>
            <person name="Meyer F."/>
            <person name="Mormann S."/>
            <person name="Nakunst D."/>
            <person name="Rueckert C."/>
            <person name="Schneiker-Bekel S."/>
            <person name="Schulze K."/>
            <person name="Voerholter F.-J."/>
            <person name="Yevsa T."/>
            <person name="Engle J.T."/>
            <person name="Goldman W.E."/>
            <person name="Puehler A."/>
            <person name="Goebel U.B."/>
            <person name="Goesmann A."/>
            <person name="Bloecker H."/>
            <person name="Kaiser O."/>
            <person name="Martinez-Arias R."/>
        </authorList>
    </citation>
    <scope>NUCLEOTIDE SEQUENCE [LARGE SCALE GENOMIC DNA]</scope>
    <source>
        <strain>ATCC BAA-461 / DSM 12804 / CCUG 43448</strain>
    </source>
</reference>
<dbReference type="EMBL" id="AM902716">
    <property type="protein sequence ID" value="CAP42344.1"/>
    <property type="molecule type" value="Genomic_DNA"/>
</dbReference>
<dbReference type="SMR" id="A9IK34"/>
<dbReference type="STRING" id="94624.Bpet2004"/>
<dbReference type="KEGG" id="bpt:Bpet2004"/>
<dbReference type="eggNOG" id="COG0228">
    <property type="taxonomic scope" value="Bacteria"/>
</dbReference>
<dbReference type="Proteomes" id="UP000001225">
    <property type="component" value="Chromosome"/>
</dbReference>
<dbReference type="GO" id="GO:0005737">
    <property type="term" value="C:cytoplasm"/>
    <property type="evidence" value="ECO:0007669"/>
    <property type="project" value="UniProtKB-ARBA"/>
</dbReference>
<dbReference type="GO" id="GO:0015935">
    <property type="term" value="C:small ribosomal subunit"/>
    <property type="evidence" value="ECO:0007669"/>
    <property type="project" value="TreeGrafter"/>
</dbReference>
<dbReference type="GO" id="GO:0003735">
    <property type="term" value="F:structural constituent of ribosome"/>
    <property type="evidence" value="ECO:0007669"/>
    <property type="project" value="InterPro"/>
</dbReference>
<dbReference type="GO" id="GO:0006412">
    <property type="term" value="P:translation"/>
    <property type="evidence" value="ECO:0007669"/>
    <property type="project" value="UniProtKB-UniRule"/>
</dbReference>
<dbReference type="Gene3D" id="3.30.1320.10">
    <property type="match status" value="1"/>
</dbReference>
<dbReference type="HAMAP" id="MF_00385">
    <property type="entry name" value="Ribosomal_bS16"/>
    <property type="match status" value="1"/>
</dbReference>
<dbReference type="InterPro" id="IPR000307">
    <property type="entry name" value="Ribosomal_bS16"/>
</dbReference>
<dbReference type="InterPro" id="IPR023803">
    <property type="entry name" value="Ribosomal_bS16_dom_sf"/>
</dbReference>
<dbReference type="NCBIfam" id="TIGR00002">
    <property type="entry name" value="S16"/>
    <property type="match status" value="1"/>
</dbReference>
<dbReference type="PANTHER" id="PTHR12919">
    <property type="entry name" value="30S RIBOSOMAL PROTEIN S16"/>
    <property type="match status" value="1"/>
</dbReference>
<dbReference type="PANTHER" id="PTHR12919:SF20">
    <property type="entry name" value="SMALL RIBOSOMAL SUBUNIT PROTEIN BS16M"/>
    <property type="match status" value="1"/>
</dbReference>
<dbReference type="Pfam" id="PF00886">
    <property type="entry name" value="Ribosomal_S16"/>
    <property type="match status" value="1"/>
</dbReference>
<dbReference type="SUPFAM" id="SSF54565">
    <property type="entry name" value="Ribosomal protein S16"/>
    <property type="match status" value="1"/>
</dbReference>
<name>RS16_BORPD</name>
<evidence type="ECO:0000255" key="1">
    <source>
        <dbReference type="HAMAP-Rule" id="MF_00385"/>
    </source>
</evidence>
<evidence type="ECO:0000305" key="2"/>
<comment type="similarity">
    <text evidence="1">Belongs to the bacterial ribosomal protein bS16 family.</text>
</comment>
<proteinExistence type="inferred from homology"/>
<keyword id="KW-0687">Ribonucleoprotein</keyword>
<keyword id="KW-0689">Ribosomal protein</keyword>
<accession>A9IK34</accession>
<organism>
    <name type="scientific">Bordetella petrii (strain ATCC BAA-461 / DSM 12804 / CCUG 43448)</name>
    <dbReference type="NCBI Taxonomy" id="340100"/>
    <lineage>
        <taxon>Bacteria</taxon>
        <taxon>Pseudomonadati</taxon>
        <taxon>Pseudomonadota</taxon>
        <taxon>Betaproteobacteria</taxon>
        <taxon>Burkholderiales</taxon>
        <taxon>Alcaligenaceae</taxon>
        <taxon>Bordetella</taxon>
    </lineage>
</organism>
<feature type="chain" id="PRO_1000196341" description="Small ribosomal subunit protein bS16">
    <location>
        <begin position="1"/>
        <end position="86"/>
    </location>
</feature>
<gene>
    <name evidence="1" type="primary">rpsP</name>
    <name type="ordered locus">Bpet2004</name>
</gene>
<sequence>MVVIRMARGGSKKRPFYNLVATDSRNRRDGRFIERVGFYNPVASEGSESLRISLDRVQYWTNSGAQLSPAVERLVKDYSAKVSAAA</sequence>